<reference key="1">
    <citation type="journal article" date="2009" name="PLoS Genet.">
        <title>Organised genome dynamics in the Escherichia coli species results in highly diverse adaptive paths.</title>
        <authorList>
            <person name="Touchon M."/>
            <person name="Hoede C."/>
            <person name="Tenaillon O."/>
            <person name="Barbe V."/>
            <person name="Baeriswyl S."/>
            <person name="Bidet P."/>
            <person name="Bingen E."/>
            <person name="Bonacorsi S."/>
            <person name="Bouchier C."/>
            <person name="Bouvet O."/>
            <person name="Calteau A."/>
            <person name="Chiapello H."/>
            <person name="Clermont O."/>
            <person name="Cruveiller S."/>
            <person name="Danchin A."/>
            <person name="Diard M."/>
            <person name="Dossat C."/>
            <person name="Karoui M.E."/>
            <person name="Frapy E."/>
            <person name="Garry L."/>
            <person name="Ghigo J.M."/>
            <person name="Gilles A.M."/>
            <person name="Johnson J."/>
            <person name="Le Bouguenec C."/>
            <person name="Lescat M."/>
            <person name="Mangenot S."/>
            <person name="Martinez-Jehanne V."/>
            <person name="Matic I."/>
            <person name="Nassif X."/>
            <person name="Oztas S."/>
            <person name="Petit M.A."/>
            <person name="Pichon C."/>
            <person name="Rouy Z."/>
            <person name="Ruf C.S."/>
            <person name="Schneider D."/>
            <person name="Tourret J."/>
            <person name="Vacherie B."/>
            <person name="Vallenet D."/>
            <person name="Medigue C."/>
            <person name="Rocha E.P.C."/>
            <person name="Denamur E."/>
        </authorList>
    </citation>
    <scope>NUCLEOTIDE SEQUENCE [LARGE SCALE GENOMIC DNA]</scope>
    <source>
        <strain>IAI1</strain>
    </source>
</reference>
<gene>
    <name evidence="1" type="primary">guaC</name>
    <name type="ordered locus">ECIAI1_0102</name>
</gene>
<comment type="function">
    <text evidence="1">Catalyzes the irreversible NADPH-dependent deamination of GMP to IMP. It functions in the conversion of nucleobase, nucleoside and nucleotide derivatives of G to A nucleotides, and in maintaining the intracellular balance of A and G nucleotides.</text>
</comment>
<comment type="catalytic activity">
    <reaction evidence="1">
        <text>IMP + NH4(+) + NADP(+) = GMP + NADPH + 2 H(+)</text>
        <dbReference type="Rhea" id="RHEA:17185"/>
        <dbReference type="ChEBI" id="CHEBI:15378"/>
        <dbReference type="ChEBI" id="CHEBI:28938"/>
        <dbReference type="ChEBI" id="CHEBI:57783"/>
        <dbReference type="ChEBI" id="CHEBI:58053"/>
        <dbReference type="ChEBI" id="CHEBI:58115"/>
        <dbReference type="ChEBI" id="CHEBI:58349"/>
        <dbReference type="EC" id="1.7.1.7"/>
    </reaction>
</comment>
<comment type="subunit">
    <text evidence="1">Homotetramer.</text>
</comment>
<comment type="similarity">
    <text evidence="1">Belongs to the IMPDH/GMPR family. GuaC type 1 subfamily.</text>
</comment>
<name>GUAC_ECO8A</name>
<accession>B7M145</accession>
<proteinExistence type="inferred from homology"/>
<evidence type="ECO:0000255" key="1">
    <source>
        <dbReference type="HAMAP-Rule" id="MF_00596"/>
    </source>
</evidence>
<feature type="chain" id="PRO_1000129853" description="GMP reductase">
    <location>
        <begin position="1"/>
        <end position="347"/>
    </location>
</feature>
<feature type="active site" description="Thioimidate intermediate" evidence="1">
    <location>
        <position position="186"/>
    </location>
</feature>
<feature type="binding site" evidence="1">
    <location>
        <begin position="108"/>
        <end position="131"/>
    </location>
    <ligand>
        <name>NADP(+)</name>
        <dbReference type="ChEBI" id="CHEBI:58349"/>
    </ligand>
</feature>
<feature type="binding site" evidence="1">
    <location>
        <position position="181"/>
    </location>
    <ligand>
        <name>K(+)</name>
        <dbReference type="ChEBI" id="CHEBI:29103"/>
    </ligand>
</feature>
<feature type="binding site" evidence="1">
    <location>
        <position position="183"/>
    </location>
    <ligand>
        <name>K(+)</name>
        <dbReference type="ChEBI" id="CHEBI:29103"/>
    </ligand>
</feature>
<feature type="binding site" evidence="1">
    <location>
        <begin position="216"/>
        <end position="239"/>
    </location>
    <ligand>
        <name>NADP(+)</name>
        <dbReference type="ChEBI" id="CHEBI:58349"/>
    </ligand>
</feature>
<organism>
    <name type="scientific">Escherichia coli O8 (strain IAI1)</name>
    <dbReference type="NCBI Taxonomy" id="585034"/>
    <lineage>
        <taxon>Bacteria</taxon>
        <taxon>Pseudomonadati</taxon>
        <taxon>Pseudomonadota</taxon>
        <taxon>Gammaproteobacteria</taxon>
        <taxon>Enterobacterales</taxon>
        <taxon>Enterobacteriaceae</taxon>
        <taxon>Escherichia</taxon>
    </lineage>
</organism>
<keyword id="KW-0479">Metal-binding</keyword>
<keyword id="KW-0521">NADP</keyword>
<keyword id="KW-0560">Oxidoreductase</keyword>
<keyword id="KW-0630">Potassium</keyword>
<protein>
    <recommendedName>
        <fullName evidence="1">GMP reductase</fullName>
        <ecNumber evidence="1">1.7.1.7</ecNumber>
    </recommendedName>
    <alternativeName>
        <fullName evidence="1">Guanosine 5'-monophosphate oxidoreductase</fullName>
        <shortName evidence="1">Guanosine monophosphate reductase</shortName>
    </alternativeName>
</protein>
<dbReference type="EC" id="1.7.1.7" evidence="1"/>
<dbReference type="EMBL" id="CU928160">
    <property type="protein sequence ID" value="CAQ96991.1"/>
    <property type="molecule type" value="Genomic_DNA"/>
</dbReference>
<dbReference type="RefSeq" id="WP_001217338.1">
    <property type="nucleotide sequence ID" value="NC_011741.1"/>
</dbReference>
<dbReference type="SMR" id="B7M145"/>
<dbReference type="GeneID" id="93777331"/>
<dbReference type="KEGG" id="ecr:ECIAI1_0102"/>
<dbReference type="HOGENOM" id="CLU_022552_5_3_6"/>
<dbReference type="GO" id="GO:0005829">
    <property type="term" value="C:cytosol"/>
    <property type="evidence" value="ECO:0007669"/>
    <property type="project" value="TreeGrafter"/>
</dbReference>
<dbReference type="GO" id="GO:1902560">
    <property type="term" value="C:GMP reductase complex"/>
    <property type="evidence" value="ECO:0007669"/>
    <property type="project" value="InterPro"/>
</dbReference>
<dbReference type="GO" id="GO:0003920">
    <property type="term" value="F:GMP reductase activity"/>
    <property type="evidence" value="ECO:0007669"/>
    <property type="project" value="UniProtKB-UniRule"/>
</dbReference>
<dbReference type="GO" id="GO:0046872">
    <property type="term" value="F:metal ion binding"/>
    <property type="evidence" value="ECO:0007669"/>
    <property type="project" value="UniProtKB-KW"/>
</dbReference>
<dbReference type="GO" id="GO:0006163">
    <property type="term" value="P:purine nucleotide metabolic process"/>
    <property type="evidence" value="ECO:0007669"/>
    <property type="project" value="UniProtKB-UniRule"/>
</dbReference>
<dbReference type="CDD" id="cd00381">
    <property type="entry name" value="IMPDH"/>
    <property type="match status" value="1"/>
</dbReference>
<dbReference type="FunFam" id="3.20.20.70:FF:000012">
    <property type="entry name" value="GMP reductase"/>
    <property type="match status" value="1"/>
</dbReference>
<dbReference type="Gene3D" id="3.20.20.70">
    <property type="entry name" value="Aldolase class I"/>
    <property type="match status" value="1"/>
</dbReference>
<dbReference type="HAMAP" id="MF_00596">
    <property type="entry name" value="GMP_reduct_type1"/>
    <property type="match status" value="1"/>
</dbReference>
<dbReference type="InterPro" id="IPR013785">
    <property type="entry name" value="Aldolase_TIM"/>
</dbReference>
<dbReference type="InterPro" id="IPR050139">
    <property type="entry name" value="GMP_reductase"/>
</dbReference>
<dbReference type="InterPro" id="IPR005993">
    <property type="entry name" value="GMPR"/>
</dbReference>
<dbReference type="InterPro" id="IPR015875">
    <property type="entry name" value="IMP_DH/GMP_Rdtase_CS"/>
</dbReference>
<dbReference type="InterPro" id="IPR001093">
    <property type="entry name" value="IMP_DH_GMPRt"/>
</dbReference>
<dbReference type="NCBIfam" id="TIGR01305">
    <property type="entry name" value="GMP_reduct_1"/>
    <property type="match status" value="1"/>
</dbReference>
<dbReference type="NCBIfam" id="NF003470">
    <property type="entry name" value="PRK05096.1"/>
    <property type="match status" value="1"/>
</dbReference>
<dbReference type="PANTHER" id="PTHR43170">
    <property type="entry name" value="GMP REDUCTASE"/>
    <property type="match status" value="1"/>
</dbReference>
<dbReference type="PANTHER" id="PTHR43170:SF5">
    <property type="entry name" value="GMP REDUCTASE"/>
    <property type="match status" value="1"/>
</dbReference>
<dbReference type="Pfam" id="PF00478">
    <property type="entry name" value="IMPDH"/>
    <property type="match status" value="1"/>
</dbReference>
<dbReference type="PIRSF" id="PIRSF000235">
    <property type="entry name" value="GMP_reductase"/>
    <property type="match status" value="1"/>
</dbReference>
<dbReference type="SMART" id="SM01240">
    <property type="entry name" value="IMPDH"/>
    <property type="match status" value="1"/>
</dbReference>
<dbReference type="SUPFAM" id="SSF51412">
    <property type="entry name" value="Inosine monophosphate dehydrogenase (IMPDH)"/>
    <property type="match status" value="1"/>
</dbReference>
<dbReference type="PROSITE" id="PS00487">
    <property type="entry name" value="IMP_DH_GMP_RED"/>
    <property type="match status" value="1"/>
</dbReference>
<sequence length="347" mass="37384">MRIEEDLKLGFKDVLIRPKRSTLKSRSDVELERQFTFKHSGQSWSGVPIIAANMDTVGTFSMASALASFDILTAVHKHYSVEEWQAFINNSSADVLKHVMVSTGTSDADFEKTKQILDLNPALNFVCIDVANGYSEHFVQFVAKAREAWPTKTICAGNVVTGEMCEELILSGADIVKVGIGPGSVCTTRVKTGVGYPQLSAVIECADAAHGLGGMIVSDGGCTTPGDVAKAFGGGADFVMLGGMLAGHEESGGRIVEENGEKFMLFYGMSSESAMKRHVGGVAEYRAAEGKTVKLPLRGPVENTARDILGGLRSACTYVGASRLKELTKRTTFIRVQEQENRIFNNL</sequence>